<reference evidence="6 7" key="1">
    <citation type="journal article" date="1996" name="Biosci. Biotechnol. Biochem.">
        <title>Cloning and nucleotide sequence of the beta-D-glucosidase gene from Bifidobacterium breve clb, and expression of beta-D-glucosidase activity in Escherichia coli.</title>
        <authorList>
            <person name="Nunoura N."/>
            <person name="Ohdan K."/>
            <person name="Tanaka K."/>
            <person name="Tamaki H."/>
            <person name="Yano T."/>
            <person name="Inui M."/>
            <person name="Yukawa H."/>
            <person name="Yamamoto K."/>
            <person name="Kumagai H."/>
        </authorList>
    </citation>
    <scope>NUCLEOTIDE SEQUENCE [GENOMIC DNA]</scope>
    <scope>FUNCTION</scope>
    <scope>CATALYTIC ACTIVITY</scope>
    <scope>BIOPHYSICOCHEMICAL PROPERTIES</scope>
</reference>
<reference evidence="6" key="2">
    <citation type="journal article" date="1996" name="Biosci. Biotechnol. Biochem.">
        <title>Purification and characterization of beta-D-glucosidase (beta-D-fucosidase) from Bifidobacterium breve clb acclimated to cellobiose.</title>
        <authorList>
            <person name="Nunoura N."/>
            <person name="Ohdan K."/>
            <person name="Yano T."/>
            <person name="Yamamoto K."/>
            <person name="Kumagai H."/>
        </authorList>
    </citation>
    <scope>PROTEIN SEQUENCE OF 2-30</scope>
    <scope>FUNCTION</scope>
    <scope>CATALYTIC ACTIVITY</scope>
    <scope>ACTIVITY REGULATION</scope>
    <scope>BIOPHYSICOCHEMICAL PROPERTIES</scope>
    <scope>SUBUNIT</scope>
    <scope>SUBCELLULAR LOCATION</scope>
</reference>
<protein>
    <recommendedName>
        <fullName>Bifunctional beta-D-glucosidase/beta-D-fucosidase</fullName>
        <ecNumber>3.2.1.21</ecNumber>
        <ecNumber>3.2.1.38</ecNumber>
    </recommendedName>
</protein>
<sequence length="460" mass="51514">MTMIFPKGFMFGTATAAYQIEGAVAEGGRTPSIWDTFSHTGHTLNGDTGDVADDFYHRWEDDLKLLRDLGVNAYRFSIGIPRVIPTPDGKPNQEGLDFYSRIVDRLLEYGIAPIVTLYHWDLPQYMASGDGREGGWLERETAYRIADYAGIVAKCLGDRVHTYTTLNEPWCSAHLSYGGTEHAPGLGAGPLAFRAAHHLNLAHGLMCEAVRAEAGAKPGLSVTLNLQICRGDADAVHRVDLIGNRVFLDPMLRGRYPDELFSITKGICDWGFVCDGDLDLIHQPIDVLGLNYYSTNLVKMSDRPQFPQSTEASTAPGASDVDWLPTAGPHTEMGWNIDPDALYETLVRLNDNYPGMPLVVTENGMACPDKVEVGTDGVKMVHDNDRIDYLRRHLEAVYRAIEEGTDVRGYFAWSLMDNFEWAFGYSKRFGLTYVDYESQERVKKDSFDWYRRFIADHSAR</sequence>
<comment type="function">
    <text evidence="4 5">Bifunctional beta-D-glucosidase/beta-D-fucosidase. Activity towards pNP-beta-D-fucoside is about 80-85% of the activity towards pNP-beta-D-glucoside. Also has slight activity (less than 10%) towards pNP-beta-D-galactoside, and very low activity (less than 1%) towards pNP-beta-D-xyloside. Hydrolyzes laminaribiose, sophorose, cellobiose and gentobiose. Not active against maltose, pNP-alpha-D-glucoside or pNP-beta-L-fucoside.</text>
</comment>
<comment type="catalytic activity">
    <reaction evidence="4 5">
        <text>Hydrolysis of terminal, non-reducing beta-D-glucosyl residues with release of beta-D-glucose.</text>
        <dbReference type="EC" id="3.2.1.21"/>
    </reaction>
</comment>
<comment type="catalytic activity">
    <reaction evidence="4 5">
        <text>Hydrolysis of terminal non-reducing beta-D-fucose residues in beta-D-fucosides.</text>
        <dbReference type="EC" id="3.2.1.38"/>
    </reaction>
</comment>
<comment type="activity regulation">
    <text evidence="5">Inhibited by Cu(2+), Ag(+) and Hg(+), but not by other cations such as Mg(2+), Ca(2+), Mn(2+) and Co(2+). Inhibited by 1-amino-1-deoxy-D-glucose and p-chloromercuribenzoic acid, but not by EDTA or dithiothreitol. Inhibited by the disaccharides sucrose, lactose and cellobiose. The monosaccharides D-fructose, D-mannose, D-xylose and D-glucose increase the beta-D-fucosidase activity, but not the beta-D-glucosidase activity. D-glucose inhibits the beta-D-glucosidase activity, but promotes the beta-D-fucosidase activity. D-fucose inhibits the beta-D-glucosidase activity and does not significantly affect the beta-D-fucosidase activity.</text>
</comment>
<comment type="biophysicochemical properties">
    <kinetics>
        <KM evidence="4 5">1.3 mM for pNP-beta-D-glucoside</KM>
        <KM evidence="4 5">0.7 mM for pNP-beta-D-fucoside</KM>
    </kinetics>
    <phDependence>
        <text evidence="4 5">Optimum pH is 5.5 with pNP-beta-D-glucoside as a substrate. Retains more than 90% of its activity between pH 5.0 and 7.0. Retains 70% of its activity at pH 4.5 and 8.5.</text>
    </phDependence>
    <temperatureDependence>
        <text evidence="4 5">Optimum temperature is 45 degrees Celsius with pNP-beta-D-glucoside as a substrate. Retains 60% of its activity after 10 minutes incubation at 50 degrees Celsius.</text>
    </temperatureDependence>
</comment>
<comment type="subunit">
    <text evidence="5">Monomer.</text>
</comment>
<comment type="subcellular location">
    <subcellularLocation>
        <location evidence="5">Secreted</location>
    </subcellularLocation>
</comment>
<comment type="similarity">
    <text evidence="2">Belongs to the glycosyl hydrolase 1 family.</text>
</comment>
<keyword id="KW-0119">Carbohydrate metabolism</keyword>
<keyword id="KW-0136">Cellulose degradation</keyword>
<keyword id="KW-0903">Direct protein sequencing</keyword>
<keyword id="KW-0326">Glycosidase</keyword>
<keyword id="KW-0378">Hydrolase</keyword>
<keyword id="KW-0624">Polysaccharide degradation</keyword>
<keyword id="KW-0964">Secreted</keyword>
<feature type="initiator methionine" description="Removed" evidence="5">
    <location>
        <position position="1"/>
    </location>
</feature>
<feature type="chain" id="PRO_0000395428" description="Bifunctional beta-D-glucosidase/beta-D-fucosidase" evidence="5">
    <location>
        <begin position="2"/>
        <end position="460"/>
    </location>
</feature>
<feature type="active site" description="Proton donor" evidence="1">
    <location>
        <position position="168"/>
    </location>
</feature>
<feature type="active site" description="Nucleophile" evidence="1 3">
    <location>
        <position position="362"/>
    </location>
</feature>
<evidence type="ECO:0000250" key="1">
    <source>
        <dbReference type="UniProtKB" id="Q25BW5"/>
    </source>
</evidence>
<evidence type="ECO:0000255" key="2"/>
<evidence type="ECO:0000255" key="3">
    <source>
        <dbReference type="PROSITE-ProRule" id="PRU10055"/>
    </source>
</evidence>
<evidence type="ECO:0000269" key="4">
    <source>
    </source>
</evidence>
<evidence type="ECO:0000269" key="5">
    <source>
    </source>
</evidence>
<evidence type="ECO:0000305" key="6"/>
<evidence type="ECO:0000312" key="7">
    <source>
        <dbReference type="EMBL" id="BAA19881.1"/>
    </source>
</evidence>
<accession>P94248</accession>
<accession>O08487</accession>
<proteinExistence type="evidence at protein level"/>
<organism>
    <name type="scientific">Bifidobacterium breve</name>
    <dbReference type="NCBI Taxonomy" id="1685"/>
    <lineage>
        <taxon>Bacteria</taxon>
        <taxon>Bacillati</taxon>
        <taxon>Actinomycetota</taxon>
        <taxon>Actinomycetes</taxon>
        <taxon>Bifidobacteriales</taxon>
        <taxon>Bifidobacteriaceae</taxon>
        <taxon>Bifidobacterium</taxon>
    </lineage>
</organism>
<dbReference type="EC" id="3.2.1.21"/>
<dbReference type="EC" id="3.2.1.38"/>
<dbReference type="EMBL" id="D88311">
    <property type="protein sequence ID" value="BAA19881.1"/>
    <property type="molecule type" value="Genomic_DNA"/>
</dbReference>
<dbReference type="PIR" id="JC5137">
    <property type="entry name" value="JC5137"/>
</dbReference>
<dbReference type="SMR" id="P94248"/>
<dbReference type="CAZy" id="GH1">
    <property type="family name" value="Glycoside Hydrolase Family 1"/>
</dbReference>
<dbReference type="SABIO-RK" id="P94248"/>
<dbReference type="GO" id="GO:0005829">
    <property type="term" value="C:cytosol"/>
    <property type="evidence" value="ECO:0007669"/>
    <property type="project" value="TreeGrafter"/>
</dbReference>
<dbReference type="GO" id="GO:0005576">
    <property type="term" value="C:extracellular region"/>
    <property type="evidence" value="ECO:0007669"/>
    <property type="project" value="UniProtKB-SubCell"/>
</dbReference>
<dbReference type="GO" id="GO:0033907">
    <property type="term" value="F:beta-D-fucosidase activity"/>
    <property type="evidence" value="ECO:0007669"/>
    <property type="project" value="UniProtKB-EC"/>
</dbReference>
<dbReference type="GO" id="GO:0008422">
    <property type="term" value="F:beta-glucosidase activity"/>
    <property type="evidence" value="ECO:0007669"/>
    <property type="project" value="UniProtKB-EC"/>
</dbReference>
<dbReference type="GO" id="GO:0030245">
    <property type="term" value="P:cellulose catabolic process"/>
    <property type="evidence" value="ECO:0007669"/>
    <property type="project" value="UniProtKB-KW"/>
</dbReference>
<dbReference type="FunFam" id="3.20.20.80:FF:000004">
    <property type="entry name" value="Beta-glucosidase 6-phospho-beta-glucosidase"/>
    <property type="match status" value="1"/>
</dbReference>
<dbReference type="Gene3D" id="3.20.20.80">
    <property type="entry name" value="Glycosidases"/>
    <property type="match status" value="1"/>
</dbReference>
<dbReference type="InterPro" id="IPR001360">
    <property type="entry name" value="Glyco_hydro_1"/>
</dbReference>
<dbReference type="InterPro" id="IPR018120">
    <property type="entry name" value="Glyco_hydro_1_AS"/>
</dbReference>
<dbReference type="InterPro" id="IPR017736">
    <property type="entry name" value="Glyco_hydro_1_beta-glucosidase"/>
</dbReference>
<dbReference type="InterPro" id="IPR033132">
    <property type="entry name" value="Glyco_hydro_1_N_CS"/>
</dbReference>
<dbReference type="InterPro" id="IPR017853">
    <property type="entry name" value="Glycoside_hydrolase_SF"/>
</dbReference>
<dbReference type="NCBIfam" id="TIGR03356">
    <property type="entry name" value="BGL"/>
    <property type="match status" value="1"/>
</dbReference>
<dbReference type="PANTHER" id="PTHR10353">
    <property type="entry name" value="GLYCOSYL HYDROLASE"/>
    <property type="match status" value="1"/>
</dbReference>
<dbReference type="PANTHER" id="PTHR10353:SF36">
    <property type="entry name" value="LP05116P"/>
    <property type="match status" value="1"/>
</dbReference>
<dbReference type="Pfam" id="PF00232">
    <property type="entry name" value="Glyco_hydro_1"/>
    <property type="match status" value="1"/>
</dbReference>
<dbReference type="PRINTS" id="PR00131">
    <property type="entry name" value="GLHYDRLASE1"/>
</dbReference>
<dbReference type="SUPFAM" id="SSF51445">
    <property type="entry name" value="(Trans)glycosidases"/>
    <property type="match status" value="1"/>
</dbReference>
<dbReference type="PROSITE" id="PS00572">
    <property type="entry name" value="GLYCOSYL_HYDROL_F1_1"/>
    <property type="match status" value="1"/>
</dbReference>
<dbReference type="PROSITE" id="PS00653">
    <property type="entry name" value="GLYCOSYL_HYDROL_F1_2"/>
    <property type="match status" value="1"/>
</dbReference>
<name>BGLFU_BIFBR</name>